<dbReference type="EC" id="4.1.1.37" evidence="1"/>
<dbReference type="EMBL" id="CP000053">
    <property type="protein sequence ID" value="AAY62251.1"/>
    <property type="molecule type" value="Genomic_DNA"/>
</dbReference>
<dbReference type="SMR" id="Q4UJN8"/>
<dbReference type="STRING" id="315456.RF_1400"/>
<dbReference type="KEGG" id="rfe:RF_1400"/>
<dbReference type="eggNOG" id="COG0407">
    <property type="taxonomic scope" value="Bacteria"/>
</dbReference>
<dbReference type="HOGENOM" id="CLU_040933_0_0_5"/>
<dbReference type="OrthoDB" id="9806656at2"/>
<dbReference type="UniPathway" id="UPA00251">
    <property type="reaction ID" value="UER00321"/>
</dbReference>
<dbReference type="Proteomes" id="UP000008548">
    <property type="component" value="Chromosome"/>
</dbReference>
<dbReference type="GO" id="GO:0005829">
    <property type="term" value="C:cytosol"/>
    <property type="evidence" value="ECO:0007669"/>
    <property type="project" value="TreeGrafter"/>
</dbReference>
<dbReference type="GO" id="GO:0004853">
    <property type="term" value="F:uroporphyrinogen decarboxylase activity"/>
    <property type="evidence" value="ECO:0007669"/>
    <property type="project" value="UniProtKB-UniRule"/>
</dbReference>
<dbReference type="GO" id="GO:0006782">
    <property type="term" value="P:protoporphyrinogen IX biosynthetic process"/>
    <property type="evidence" value="ECO:0007669"/>
    <property type="project" value="UniProtKB-UniRule"/>
</dbReference>
<dbReference type="CDD" id="cd00717">
    <property type="entry name" value="URO-D"/>
    <property type="match status" value="1"/>
</dbReference>
<dbReference type="FunFam" id="3.20.20.210:FF:000007">
    <property type="entry name" value="Uroporphyrinogen decarboxylase"/>
    <property type="match status" value="1"/>
</dbReference>
<dbReference type="Gene3D" id="3.20.20.210">
    <property type="match status" value="1"/>
</dbReference>
<dbReference type="HAMAP" id="MF_00218">
    <property type="entry name" value="URO_D"/>
    <property type="match status" value="1"/>
</dbReference>
<dbReference type="InterPro" id="IPR038071">
    <property type="entry name" value="UROD/MetE-like_sf"/>
</dbReference>
<dbReference type="InterPro" id="IPR006361">
    <property type="entry name" value="Uroporphyrinogen_deCO2ase_HemE"/>
</dbReference>
<dbReference type="InterPro" id="IPR000257">
    <property type="entry name" value="Uroporphyrinogen_deCOase"/>
</dbReference>
<dbReference type="NCBIfam" id="TIGR01464">
    <property type="entry name" value="hemE"/>
    <property type="match status" value="1"/>
</dbReference>
<dbReference type="PANTHER" id="PTHR21091">
    <property type="entry name" value="METHYLTETRAHYDROFOLATE:HOMOCYSTEINE METHYLTRANSFERASE RELATED"/>
    <property type="match status" value="1"/>
</dbReference>
<dbReference type="PANTHER" id="PTHR21091:SF169">
    <property type="entry name" value="UROPORPHYRINOGEN DECARBOXYLASE"/>
    <property type="match status" value="1"/>
</dbReference>
<dbReference type="Pfam" id="PF01208">
    <property type="entry name" value="URO-D"/>
    <property type="match status" value="1"/>
</dbReference>
<dbReference type="SUPFAM" id="SSF51726">
    <property type="entry name" value="UROD/MetE-like"/>
    <property type="match status" value="1"/>
</dbReference>
<dbReference type="PROSITE" id="PS00906">
    <property type="entry name" value="UROD_1"/>
    <property type="match status" value="1"/>
</dbReference>
<dbReference type="PROSITE" id="PS00907">
    <property type="entry name" value="UROD_2"/>
    <property type="match status" value="1"/>
</dbReference>
<proteinExistence type="inferred from homology"/>
<name>DCUP_RICFE</name>
<keyword id="KW-0963">Cytoplasm</keyword>
<keyword id="KW-0210">Decarboxylase</keyword>
<keyword id="KW-0456">Lyase</keyword>
<keyword id="KW-0627">Porphyrin biosynthesis</keyword>
<accession>Q4UJN8</accession>
<protein>
    <recommendedName>
        <fullName evidence="1">Uroporphyrinogen decarboxylase</fullName>
        <shortName evidence="1">UPD</shortName>
        <shortName evidence="1">URO-D</shortName>
        <ecNumber evidence="1">4.1.1.37</ecNumber>
    </recommendedName>
</protein>
<gene>
    <name evidence="1" type="primary">hemE</name>
    <name type="ordered locus">RF_1400</name>
</gene>
<feature type="chain" id="PRO_0000278033" description="Uroporphyrinogen decarboxylase">
    <location>
        <begin position="1"/>
        <end position="346"/>
    </location>
</feature>
<feature type="binding site" evidence="1">
    <location>
        <begin position="21"/>
        <end position="25"/>
    </location>
    <ligand>
        <name>substrate</name>
    </ligand>
</feature>
<feature type="binding site" evidence="1">
    <location>
        <position position="40"/>
    </location>
    <ligand>
        <name>substrate</name>
    </ligand>
</feature>
<feature type="binding site" evidence="1">
    <location>
        <position position="71"/>
    </location>
    <ligand>
        <name>substrate</name>
    </ligand>
</feature>
<feature type="binding site" evidence="1">
    <location>
        <position position="146"/>
    </location>
    <ligand>
        <name>substrate</name>
    </ligand>
</feature>
<feature type="binding site" evidence="1">
    <location>
        <position position="201"/>
    </location>
    <ligand>
        <name>substrate</name>
    </ligand>
</feature>
<feature type="binding site" evidence="1">
    <location>
        <position position="316"/>
    </location>
    <ligand>
        <name>substrate</name>
    </ligand>
</feature>
<feature type="site" description="Transition state stabilizer" evidence="1">
    <location>
        <position position="71"/>
    </location>
</feature>
<evidence type="ECO:0000255" key="1">
    <source>
        <dbReference type="HAMAP-Rule" id="MF_00218"/>
    </source>
</evidence>
<comment type="function">
    <text evidence="1">Catalyzes the decarboxylation of four acetate groups of uroporphyrinogen-III to yield coproporphyrinogen-III.</text>
</comment>
<comment type="catalytic activity">
    <reaction evidence="1">
        <text>uroporphyrinogen III + 4 H(+) = coproporphyrinogen III + 4 CO2</text>
        <dbReference type="Rhea" id="RHEA:19865"/>
        <dbReference type="ChEBI" id="CHEBI:15378"/>
        <dbReference type="ChEBI" id="CHEBI:16526"/>
        <dbReference type="ChEBI" id="CHEBI:57308"/>
        <dbReference type="ChEBI" id="CHEBI:57309"/>
        <dbReference type="EC" id="4.1.1.37"/>
    </reaction>
</comment>
<comment type="pathway">
    <text evidence="1">Porphyrin-containing compound metabolism; protoporphyrin-IX biosynthesis; coproporphyrinogen-III from 5-aminolevulinate: step 4/4.</text>
</comment>
<comment type="subunit">
    <text evidence="1">Homodimer.</text>
</comment>
<comment type="subcellular location">
    <subcellularLocation>
        <location evidence="1">Cytoplasm</location>
    </subcellularLocation>
</comment>
<comment type="similarity">
    <text evidence="1">Belongs to the uroporphyrinogen decarboxylase family.</text>
</comment>
<reference key="1">
    <citation type="journal article" date="2005" name="PLoS Biol.">
        <title>The genome sequence of Rickettsia felis identifies the first putative conjugative plasmid in an obligate intracellular parasite.</title>
        <authorList>
            <person name="Ogata H."/>
            <person name="Renesto P."/>
            <person name="Audic S."/>
            <person name="Robert C."/>
            <person name="Blanc G."/>
            <person name="Fournier P.-E."/>
            <person name="Parinello H."/>
            <person name="Claverie J.-M."/>
            <person name="Raoult D."/>
        </authorList>
    </citation>
    <scope>NUCLEOTIDE SEQUENCE [LARGE SCALE GENOMIC DNA]</scope>
    <source>
        <strain>ATCC VR-1525 / URRWXCal2</strain>
    </source>
</reference>
<sequence>MKQIINPLKRNSNKIPIWFMRQAGRYLPEYKKVREKTKNFLDFCYDVNKATEVTLQPIKRYGFDAAIIFSDILVLPHALGWEVDFKENIGPILKQFKSQEDFKYLQSNPNNKLEKVYEIIKKVKEELPSTTSLIGFAGSPWTVMSYMLEGKGKQDFKTSKKFIYENKILAKELLNFITEKTADHLVNQAKSGADVLKLFDSWSGVLGEEEFTEFVIEPTKKIILKVKEDFPKIPIIAFPKGAVLLYEKFIKEVPIDILAVDQMVPLEKMKEWSDKVIVQGNLDPVVLLTNKEIIKEKAYKILQTMKGKNFIFNLGHGILPETPPENVKFLTEYVRLYEEKNSNSTF</sequence>
<organism>
    <name type="scientific">Rickettsia felis (strain ATCC VR-1525 / URRWXCal2)</name>
    <name type="common">Rickettsia azadi</name>
    <dbReference type="NCBI Taxonomy" id="315456"/>
    <lineage>
        <taxon>Bacteria</taxon>
        <taxon>Pseudomonadati</taxon>
        <taxon>Pseudomonadota</taxon>
        <taxon>Alphaproteobacteria</taxon>
        <taxon>Rickettsiales</taxon>
        <taxon>Rickettsiaceae</taxon>
        <taxon>Rickettsieae</taxon>
        <taxon>Rickettsia</taxon>
        <taxon>spotted fever group</taxon>
    </lineage>
</organism>